<name>TA15B_ARATH</name>
<protein>
    <recommendedName>
        <fullName>Transcription initiation factor TFIID subunit 15b</fullName>
    </recommendedName>
    <alternativeName>
        <fullName>TBP-associated factor 15b</fullName>
        <shortName>AtTAF15b</shortName>
    </alternativeName>
</protein>
<dbReference type="EMBL" id="AB025632">
    <property type="protein sequence ID" value="BAB10262.1"/>
    <property type="status" value="ALT_SEQ"/>
    <property type="molecule type" value="Genomic_DNA"/>
</dbReference>
<dbReference type="EMBL" id="CP002688">
    <property type="protein sequence ID" value="AED97056.1"/>
    <property type="molecule type" value="Genomic_DNA"/>
</dbReference>
<dbReference type="EMBL" id="CP002688">
    <property type="protein sequence ID" value="AED97057.1"/>
    <property type="molecule type" value="Genomic_DNA"/>
</dbReference>
<dbReference type="EMBL" id="AF367294">
    <property type="protein sequence ID" value="AAK56282.1"/>
    <property type="molecule type" value="mRNA"/>
</dbReference>
<dbReference type="EMBL" id="AY075677">
    <property type="protein sequence ID" value="AAL77684.1"/>
    <property type="molecule type" value="mRNA"/>
</dbReference>
<dbReference type="EMBL" id="AK316814">
    <property type="protein sequence ID" value="BAH19528.1"/>
    <property type="molecule type" value="mRNA"/>
</dbReference>
<dbReference type="EMBL" id="AY463619">
    <property type="protein sequence ID" value="AAR28021.1"/>
    <property type="molecule type" value="mRNA"/>
</dbReference>
<dbReference type="RefSeq" id="NP_568879.3">
    <property type="nucleotide sequence ID" value="NM_125233.4"/>
</dbReference>
<dbReference type="RefSeq" id="NP_851215.1">
    <property type="nucleotide sequence ID" value="NM_180884.2"/>
</dbReference>
<dbReference type="SMR" id="Q94KD0"/>
<dbReference type="BioGRID" id="21204">
    <property type="interactions" value="6"/>
</dbReference>
<dbReference type="FunCoup" id="Q94KD0">
    <property type="interactions" value="695"/>
</dbReference>
<dbReference type="IntAct" id="Q94KD0">
    <property type="interactions" value="5"/>
</dbReference>
<dbReference type="STRING" id="3702.Q94KD0"/>
<dbReference type="iPTMnet" id="Q94KD0"/>
<dbReference type="PaxDb" id="3702-AT5G58470.2"/>
<dbReference type="ProteomicsDB" id="234113"/>
<dbReference type="EnsemblPlants" id="AT5G58470.1">
    <property type="protein sequence ID" value="AT5G58470.1"/>
    <property type="gene ID" value="AT5G58470"/>
</dbReference>
<dbReference type="EnsemblPlants" id="AT5G58470.2">
    <property type="protein sequence ID" value="AT5G58470.2"/>
    <property type="gene ID" value="AT5G58470"/>
</dbReference>
<dbReference type="GeneID" id="835960"/>
<dbReference type="Gramene" id="AT5G58470.1">
    <property type="protein sequence ID" value="AT5G58470.1"/>
    <property type="gene ID" value="AT5G58470"/>
</dbReference>
<dbReference type="Gramene" id="AT5G58470.2">
    <property type="protein sequence ID" value="AT5G58470.2"/>
    <property type="gene ID" value="AT5G58470"/>
</dbReference>
<dbReference type="KEGG" id="ath:AT5G58470"/>
<dbReference type="Araport" id="AT5G58470"/>
<dbReference type="TAIR" id="AT5G58470">
    <property type="gene designation" value="TAF15B"/>
</dbReference>
<dbReference type="eggNOG" id="KOG1995">
    <property type="taxonomic scope" value="Eukaryota"/>
</dbReference>
<dbReference type="HOGENOM" id="CLU_050310_0_1_1"/>
<dbReference type="InParanoid" id="Q94KD0"/>
<dbReference type="OMA" id="QRENGSY"/>
<dbReference type="OrthoDB" id="76445at2759"/>
<dbReference type="PhylomeDB" id="Q94KD0"/>
<dbReference type="PRO" id="PR:Q94KD0"/>
<dbReference type="Proteomes" id="UP000006548">
    <property type="component" value="Chromosome 5"/>
</dbReference>
<dbReference type="ExpressionAtlas" id="Q94KD0">
    <property type="expression patterns" value="baseline and differential"/>
</dbReference>
<dbReference type="GO" id="GO:0009507">
    <property type="term" value="C:chloroplast"/>
    <property type="evidence" value="ECO:0007005"/>
    <property type="project" value="TAIR"/>
</dbReference>
<dbReference type="GO" id="GO:0005634">
    <property type="term" value="C:nucleus"/>
    <property type="evidence" value="ECO:0007669"/>
    <property type="project" value="UniProtKB-SubCell"/>
</dbReference>
<dbReference type="GO" id="GO:0003723">
    <property type="term" value="F:RNA binding"/>
    <property type="evidence" value="ECO:0007669"/>
    <property type="project" value="UniProtKB-KW"/>
</dbReference>
<dbReference type="GO" id="GO:0008270">
    <property type="term" value="F:zinc ion binding"/>
    <property type="evidence" value="ECO:0007669"/>
    <property type="project" value="UniProtKB-KW"/>
</dbReference>
<dbReference type="CDD" id="cd12280">
    <property type="entry name" value="RRM_FET"/>
    <property type="match status" value="1"/>
</dbReference>
<dbReference type="FunFam" id="3.30.70.330:FF:001038">
    <property type="entry name" value="BnaA10g11870D protein"/>
    <property type="match status" value="1"/>
</dbReference>
<dbReference type="FunFam" id="4.10.1060.10:FF:000008">
    <property type="entry name" value="TATA-binding protein-associated factor 2N isoform X1"/>
    <property type="match status" value="1"/>
</dbReference>
<dbReference type="Gene3D" id="3.30.70.330">
    <property type="match status" value="1"/>
</dbReference>
<dbReference type="Gene3D" id="4.10.1060.10">
    <property type="entry name" value="Zinc finger, RanBP2-type"/>
    <property type="match status" value="1"/>
</dbReference>
<dbReference type="InterPro" id="IPR012677">
    <property type="entry name" value="Nucleotide-bd_a/b_plait_sf"/>
</dbReference>
<dbReference type="InterPro" id="IPR035979">
    <property type="entry name" value="RBD_domain_sf"/>
</dbReference>
<dbReference type="InterPro" id="IPR000504">
    <property type="entry name" value="RRM_dom"/>
</dbReference>
<dbReference type="InterPro" id="IPR001876">
    <property type="entry name" value="Znf_RanBP2"/>
</dbReference>
<dbReference type="InterPro" id="IPR036443">
    <property type="entry name" value="Znf_RanBP2_sf"/>
</dbReference>
<dbReference type="PANTHER" id="PTHR12999:SF7">
    <property type="entry name" value="TRANSCRIPTION INITIATION FACTOR TFIID SUBUNIT 15B"/>
    <property type="match status" value="1"/>
</dbReference>
<dbReference type="PANTHER" id="PTHR12999">
    <property type="entry name" value="ZINC FINGER RAN-BINDING DOMAIN-CONTAINING PROTEIN 2 ZRANB2-RELATED"/>
    <property type="match status" value="1"/>
</dbReference>
<dbReference type="Pfam" id="PF00076">
    <property type="entry name" value="RRM_1"/>
    <property type="match status" value="1"/>
</dbReference>
<dbReference type="Pfam" id="PF00641">
    <property type="entry name" value="Zn_ribbon_RanBP"/>
    <property type="match status" value="1"/>
</dbReference>
<dbReference type="SMART" id="SM00360">
    <property type="entry name" value="RRM"/>
    <property type="match status" value="1"/>
</dbReference>
<dbReference type="SMART" id="SM00547">
    <property type="entry name" value="ZnF_RBZ"/>
    <property type="match status" value="1"/>
</dbReference>
<dbReference type="SUPFAM" id="SSF90209">
    <property type="entry name" value="Ran binding protein zinc finger-like"/>
    <property type="match status" value="1"/>
</dbReference>
<dbReference type="SUPFAM" id="SSF54928">
    <property type="entry name" value="RNA-binding domain, RBD"/>
    <property type="match status" value="1"/>
</dbReference>
<dbReference type="PROSITE" id="PS50102">
    <property type="entry name" value="RRM"/>
    <property type="match status" value="1"/>
</dbReference>
<dbReference type="PROSITE" id="PS01358">
    <property type="entry name" value="ZF_RANBP2_1"/>
    <property type="match status" value="1"/>
</dbReference>
<dbReference type="PROSITE" id="PS50199">
    <property type="entry name" value="ZF_RANBP2_2"/>
    <property type="match status" value="1"/>
</dbReference>
<evidence type="ECO:0000250" key="1"/>
<evidence type="ECO:0000255" key="2">
    <source>
        <dbReference type="PROSITE-ProRule" id="PRU00176"/>
    </source>
</evidence>
<evidence type="ECO:0000255" key="3">
    <source>
        <dbReference type="PROSITE-ProRule" id="PRU00322"/>
    </source>
</evidence>
<evidence type="ECO:0000256" key="4">
    <source>
        <dbReference type="SAM" id="MobiDB-lite"/>
    </source>
</evidence>
<evidence type="ECO:0000269" key="5">
    <source>
    </source>
</evidence>
<evidence type="ECO:0000269" key="6">
    <source>
    </source>
</evidence>
<evidence type="ECO:0000305" key="7"/>
<organism>
    <name type="scientific">Arabidopsis thaliana</name>
    <name type="common">Mouse-ear cress</name>
    <dbReference type="NCBI Taxonomy" id="3702"/>
    <lineage>
        <taxon>Eukaryota</taxon>
        <taxon>Viridiplantae</taxon>
        <taxon>Streptophyta</taxon>
        <taxon>Embryophyta</taxon>
        <taxon>Tracheophyta</taxon>
        <taxon>Spermatophyta</taxon>
        <taxon>Magnoliopsida</taxon>
        <taxon>eudicotyledons</taxon>
        <taxon>Gunneridae</taxon>
        <taxon>Pentapetalae</taxon>
        <taxon>rosids</taxon>
        <taxon>malvids</taxon>
        <taxon>Brassicales</taxon>
        <taxon>Brassicaceae</taxon>
        <taxon>Camelineae</taxon>
        <taxon>Arabidopsis</taxon>
    </lineage>
</organism>
<gene>
    <name type="primary">TAF15B</name>
    <name type="ordered locus">At5g58470</name>
    <name type="ORF">MQJ2.60</name>
    <name type="ORF">MQJ2.7</name>
</gene>
<proteinExistence type="evidence at protein level"/>
<feature type="chain" id="PRO_0000424055" description="Transcription initiation factor TFIID subunit 15b">
    <location>
        <begin position="1"/>
        <end position="422"/>
    </location>
</feature>
<feature type="domain" description="RRM" evidence="2">
    <location>
        <begin position="280"/>
        <end position="371"/>
    </location>
</feature>
<feature type="zinc finger region" description="RanBP2-type" evidence="3">
    <location>
        <begin position="84"/>
        <end position="115"/>
    </location>
</feature>
<feature type="region of interest" description="Disordered" evidence="4">
    <location>
        <begin position="1"/>
        <end position="24"/>
    </location>
</feature>
<feature type="region of interest" description="Disordered" evidence="4">
    <location>
        <begin position="47"/>
        <end position="94"/>
    </location>
</feature>
<feature type="region of interest" description="Disordered" evidence="4">
    <location>
        <begin position="111"/>
        <end position="263"/>
    </location>
</feature>
<feature type="region of interest" description="Disordered" evidence="4">
    <location>
        <begin position="368"/>
        <end position="422"/>
    </location>
</feature>
<feature type="compositionally biased region" description="Gly residues" evidence="4">
    <location>
        <begin position="8"/>
        <end position="24"/>
    </location>
</feature>
<feature type="compositionally biased region" description="Gly residues" evidence="4">
    <location>
        <begin position="47"/>
        <end position="83"/>
    </location>
</feature>
<feature type="compositionally biased region" description="Gly residues" evidence="4">
    <location>
        <begin position="123"/>
        <end position="133"/>
    </location>
</feature>
<feature type="compositionally biased region" description="Basic and acidic residues" evidence="4">
    <location>
        <begin position="134"/>
        <end position="156"/>
    </location>
</feature>
<feature type="compositionally biased region" description="Gly residues" evidence="4">
    <location>
        <begin position="219"/>
        <end position="229"/>
    </location>
</feature>
<feature type="compositionally biased region" description="Gly residues" evidence="4">
    <location>
        <begin position="236"/>
        <end position="247"/>
    </location>
</feature>
<feature type="compositionally biased region" description="Basic and acidic residues" evidence="4">
    <location>
        <begin position="252"/>
        <end position="263"/>
    </location>
</feature>
<feature type="compositionally biased region" description="Gly residues" evidence="4">
    <location>
        <begin position="382"/>
        <end position="397"/>
    </location>
</feature>
<comment type="function">
    <text evidence="1">TAFs are components of the transcription factor IID (TFIID) complex that is essential for mediating regulation of RNA polymerase transcription.</text>
</comment>
<comment type="subunit">
    <text evidence="6">Component of the TFIID complex. TFIID is composed of TATA binding protein (TBP) and a number of TBP-associated factors (TAFs) whose MWs range from 14-217 kDa. Interacts with TAF4, TAF4B, TAF5, TAF12B and TAF14.</text>
</comment>
<comment type="subcellular location">
    <subcellularLocation>
        <location evidence="7">Nucleus</location>
    </subcellularLocation>
</comment>
<comment type="tissue specificity">
    <text evidence="5">Expressed in roots, leaves and inflorescences.</text>
</comment>
<comment type="similarity">
    <text evidence="7">Belongs to the TAF15 family.</text>
</comment>
<comment type="sequence caution" evidence="7">
    <conflict type="erroneous gene model prediction">
        <sequence resource="EMBL-CDS" id="BAB10262"/>
    </conflict>
</comment>
<sequence length="422" mass="42316">MAGMYNQDGGGGAPIPSYGGDGYGGGGGYGGGDAGYGGRGASGGGSYGGRGGYGGGGGRGNRGGGGGGYQGGDRGGRGSGGGGRDGDWRCPNPSCGNVNFARRVECNKCGALAPSGTSSGANDRGGGGYSRGGGDSDRGGGRGGRNDSGRSYESSRYDGGSRSGGSYGSGSQRENGSYGQAPPPAAAIPSYDGSGSYPPPTGYGMEAVPPPTSYSGGPPSYGGPRGGYGSDAPSTGGRGGRSGGYDGGSAPRRQEASYEDAATEKVKQCDADCDDNCDNARIYISNLPPDVTTDELKDLFGGIGQVGRIKQKRGYKDQWPYNIKIYTDEKGNYKGDACLAYEDPSAAHSAGGFFNNYEMRGNKISVTMAEKSAPRAPTFDQRGGGRGGGGGGYGGGGGDRRRDNYSSGPDRNHHGGNRSRPY</sequence>
<keyword id="KW-0010">Activator</keyword>
<keyword id="KW-0479">Metal-binding</keyword>
<keyword id="KW-0539">Nucleus</keyword>
<keyword id="KW-1185">Reference proteome</keyword>
<keyword id="KW-0694">RNA-binding</keyword>
<keyword id="KW-0804">Transcription</keyword>
<keyword id="KW-0805">Transcription regulation</keyword>
<keyword id="KW-0862">Zinc</keyword>
<keyword id="KW-0863">Zinc-finger</keyword>
<reference key="1">
    <citation type="journal article" date="2004" name="Gene">
        <title>TBP-associated factors in Arabidopsis.</title>
        <authorList>
            <person name="Lago C."/>
            <person name="Clerici E."/>
            <person name="Mizzi L."/>
            <person name="Colombo L."/>
            <person name="Kater M.M."/>
        </authorList>
    </citation>
    <scope>NUCLEOTIDE SEQUENCE [MRNA]</scope>
    <scope>IDENTIFICATION</scope>
    <scope>NOMENCLATURE</scope>
    <scope>TISSUE SPECIFICITY</scope>
</reference>
<reference key="2">
    <citation type="submission" date="1999-04" db="EMBL/GenBank/DDBJ databases">
        <title>Structural analysis of Arabidopsis thaliana chromosome 5. XI.</title>
        <authorList>
            <person name="Kaneko T."/>
            <person name="Katoh T."/>
            <person name="Asamizu E."/>
            <person name="Sato S."/>
            <person name="Nakamura Y."/>
            <person name="Kotani H."/>
            <person name="Tabata S."/>
        </authorList>
    </citation>
    <scope>NUCLEOTIDE SEQUENCE [LARGE SCALE GENOMIC DNA]</scope>
    <source>
        <strain>cv. Columbia</strain>
    </source>
</reference>
<reference key="3">
    <citation type="journal article" date="2017" name="Plant J.">
        <title>Araport11: a complete reannotation of the Arabidopsis thaliana reference genome.</title>
        <authorList>
            <person name="Cheng C.Y."/>
            <person name="Krishnakumar V."/>
            <person name="Chan A.P."/>
            <person name="Thibaud-Nissen F."/>
            <person name="Schobel S."/>
            <person name="Town C.D."/>
        </authorList>
    </citation>
    <scope>GENOME REANNOTATION</scope>
    <source>
        <strain>cv. Columbia</strain>
    </source>
</reference>
<reference key="4">
    <citation type="journal article" date="2003" name="Science">
        <title>Empirical analysis of transcriptional activity in the Arabidopsis genome.</title>
        <authorList>
            <person name="Yamada K."/>
            <person name="Lim J."/>
            <person name="Dale J.M."/>
            <person name="Chen H."/>
            <person name="Shinn P."/>
            <person name="Palm C.J."/>
            <person name="Southwick A.M."/>
            <person name="Wu H.C."/>
            <person name="Kim C.J."/>
            <person name="Nguyen M."/>
            <person name="Pham P.K."/>
            <person name="Cheuk R.F."/>
            <person name="Karlin-Newmann G."/>
            <person name="Liu S.X."/>
            <person name="Lam B."/>
            <person name="Sakano H."/>
            <person name="Wu T."/>
            <person name="Yu G."/>
            <person name="Miranda M."/>
            <person name="Quach H.L."/>
            <person name="Tripp M."/>
            <person name="Chang C.H."/>
            <person name="Lee J.M."/>
            <person name="Toriumi M.J."/>
            <person name="Chan M.M."/>
            <person name="Tang C.C."/>
            <person name="Onodera C.S."/>
            <person name="Deng J.M."/>
            <person name="Akiyama K."/>
            <person name="Ansari Y."/>
            <person name="Arakawa T."/>
            <person name="Banh J."/>
            <person name="Banno F."/>
            <person name="Bowser L."/>
            <person name="Brooks S.Y."/>
            <person name="Carninci P."/>
            <person name="Chao Q."/>
            <person name="Choy N."/>
            <person name="Enju A."/>
            <person name="Goldsmith A.D."/>
            <person name="Gurjal M."/>
            <person name="Hansen N.F."/>
            <person name="Hayashizaki Y."/>
            <person name="Johnson-Hopson C."/>
            <person name="Hsuan V.W."/>
            <person name="Iida K."/>
            <person name="Karnes M."/>
            <person name="Khan S."/>
            <person name="Koesema E."/>
            <person name="Ishida J."/>
            <person name="Jiang P.X."/>
            <person name="Jones T."/>
            <person name="Kawai J."/>
            <person name="Kamiya A."/>
            <person name="Meyers C."/>
            <person name="Nakajima M."/>
            <person name="Narusaka M."/>
            <person name="Seki M."/>
            <person name="Sakurai T."/>
            <person name="Satou M."/>
            <person name="Tamse R."/>
            <person name="Vaysberg M."/>
            <person name="Wallender E.K."/>
            <person name="Wong C."/>
            <person name="Yamamura Y."/>
            <person name="Yuan S."/>
            <person name="Shinozaki K."/>
            <person name="Davis R.W."/>
            <person name="Theologis A."/>
            <person name="Ecker J.R."/>
        </authorList>
    </citation>
    <scope>NUCLEOTIDE SEQUENCE [LARGE SCALE MRNA]</scope>
    <source>
        <strain>cv. Columbia</strain>
    </source>
</reference>
<reference key="5">
    <citation type="journal article" date="2009" name="DNA Res.">
        <title>Analysis of multiple occurrences of alternative splicing events in Arabidopsis thaliana using novel sequenced full-length cDNAs.</title>
        <authorList>
            <person name="Iida K."/>
            <person name="Fukami-Kobayashi K."/>
            <person name="Toyoda A."/>
            <person name="Sakaki Y."/>
            <person name="Kobayashi M."/>
            <person name="Seki M."/>
            <person name="Shinozaki K."/>
        </authorList>
    </citation>
    <scope>NUCLEOTIDE SEQUENCE [LARGE SCALE MRNA]</scope>
    <source>
        <strain>cv. Columbia</strain>
    </source>
</reference>
<reference key="6">
    <citation type="journal article" date="2007" name="Plant Mol. Biol.">
        <title>Yeast two-hybrid map of Arabidopsis TFIID.</title>
        <authorList>
            <person name="Lawit S.J."/>
            <person name="O'Grady K."/>
            <person name="Gurley W.B."/>
            <person name="Czarnecka-Verner E."/>
        </authorList>
    </citation>
    <scope>NUCLEOTIDE SEQUENCE [MRNA] OF 1-383</scope>
    <scope>INTERACTION WITH TAF4; TAF4B; TAF5; TAF12B AND TAF14</scope>
    <source>
        <strain>cv. Columbia</strain>
    </source>
</reference>
<accession>Q94KD0</accession>
<accession>Q6S7B1</accession>
<accession>Q9FGH5</accession>